<gene>
    <name evidence="1" type="primary">xseB</name>
    <name type="ordered locus">RPB_4459</name>
</gene>
<reference key="1">
    <citation type="submission" date="2006-01" db="EMBL/GenBank/DDBJ databases">
        <title>Complete sequence of Rhodopseudomonas palustris HaA2.</title>
        <authorList>
            <consortium name="US DOE Joint Genome Institute"/>
            <person name="Copeland A."/>
            <person name="Lucas S."/>
            <person name="Lapidus A."/>
            <person name="Barry K."/>
            <person name="Detter J.C."/>
            <person name="Glavina T."/>
            <person name="Hammon N."/>
            <person name="Israni S."/>
            <person name="Pitluck S."/>
            <person name="Chain P."/>
            <person name="Malfatti S."/>
            <person name="Shin M."/>
            <person name="Vergez L."/>
            <person name="Schmutz J."/>
            <person name="Larimer F."/>
            <person name="Land M."/>
            <person name="Hauser L."/>
            <person name="Pelletier D.A."/>
            <person name="Kyrpides N."/>
            <person name="Anderson I."/>
            <person name="Oda Y."/>
            <person name="Harwood C.S."/>
            <person name="Richardson P."/>
        </authorList>
    </citation>
    <scope>NUCLEOTIDE SEQUENCE [LARGE SCALE GENOMIC DNA]</scope>
    <source>
        <strain>HaA2</strain>
    </source>
</reference>
<organism>
    <name type="scientific">Rhodopseudomonas palustris (strain HaA2)</name>
    <dbReference type="NCBI Taxonomy" id="316058"/>
    <lineage>
        <taxon>Bacteria</taxon>
        <taxon>Pseudomonadati</taxon>
        <taxon>Pseudomonadota</taxon>
        <taxon>Alphaproteobacteria</taxon>
        <taxon>Hyphomicrobiales</taxon>
        <taxon>Nitrobacteraceae</taxon>
        <taxon>Rhodopseudomonas</taxon>
    </lineage>
</organism>
<feature type="chain" id="PRO_0000303742" description="Exodeoxyribonuclease 7 small subunit">
    <location>
        <begin position="1"/>
        <end position="83"/>
    </location>
</feature>
<dbReference type="EC" id="3.1.11.6" evidence="1"/>
<dbReference type="EMBL" id="CP000250">
    <property type="protein sequence ID" value="ABD09142.1"/>
    <property type="molecule type" value="Genomic_DNA"/>
</dbReference>
<dbReference type="RefSeq" id="WP_011443325.1">
    <property type="nucleotide sequence ID" value="NC_007778.1"/>
</dbReference>
<dbReference type="SMR" id="Q2IRL8"/>
<dbReference type="STRING" id="316058.RPB_4459"/>
<dbReference type="KEGG" id="rpb:RPB_4459"/>
<dbReference type="eggNOG" id="COG1722">
    <property type="taxonomic scope" value="Bacteria"/>
</dbReference>
<dbReference type="HOGENOM" id="CLU_145918_0_3_5"/>
<dbReference type="OrthoDB" id="9808145at2"/>
<dbReference type="Proteomes" id="UP000008809">
    <property type="component" value="Chromosome"/>
</dbReference>
<dbReference type="GO" id="GO:0005829">
    <property type="term" value="C:cytosol"/>
    <property type="evidence" value="ECO:0007669"/>
    <property type="project" value="TreeGrafter"/>
</dbReference>
<dbReference type="GO" id="GO:0009318">
    <property type="term" value="C:exodeoxyribonuclease VII complex"/>
    <property type="evidence" value="ECO:0007669"/>
    <property type="project" value="InterPro"/>
</dbReference>
<dbReference type="GO" id="GO:0008855">
    <property type="term" value="F:exodeoxyribonuclease VII activity"/>
    <property type="evidence" value="ECO:0007669"/>
    <property type="project" value="UniProtKB-UniRule"/>
</dbReference>
<dbReference type="GO" id="GO:0006308">
    <property type="term" value="P:DNA catabolic process"/>
    <property type="evidence" value="ECO:0007669"/>
    <property type="project" value="UniProtKB-UniRule"/>
</dbReference>
<dbReference type="FunFam" id="1.10.287.1040:FF:000004">
    <property type="entry name" value="Exodeoxyribonuclease 7 small subunit"/>
    <property type="match status" value="1"/>
</dbReference>
<dbReference type="Gene3D" id="1.10.287.1040">
    <property type="entry name" value="Exonuclease VII, small subunit"/>
    <property type="match status" value="1"/>
</dbReference>
<dbReference type="HAMAP" id="MF_00337">
    <property type="entry name" value="Exonuc_7_S"/>
    <property type="match status" value="1"/>
</dbReference>
<dbReference type="InterPro" id="IPR003761">
    <property type="entry name" value="Exonuc_VII_S"/>
</dbReference>
<dbReference type="InterPro" id="IPR037004">
    <property type="entry name" value="Exonuc_VII_ssu_sf"/>
</dbReference>
<dbReference type="NCBIfam" id="NF002139">
    <property type="entry name" value="PRK00977.1-3"/>
    <property type="match status" value="1"/>
</dbReference>
<dbReference type="NCBIfam" id="NF002140">
    <property type="entry name" value="PRK00977.1-4"/>
    <property type="match status" value="1"/>
</dbReference>
<dbReference type="NCBIfam" id="TIGR01280">
    <property type="entry name" value="xseB"/>
    <property type="match status" value="1"/>
</dbReference>
<dbReference type="PANTHER" id="PTHR34137">
    <property type="entry name" value="EXODEOXYRIBONUCLEASE 7 SMALL SUBUNIT"/>
    <property type="match status" value="1"/>
</dbReference>
<dbReference type="PANTHER" id="PTHR34137:SF1">
    <property type="entry name" value="EXODEOXYRIBONUCLEASE 7 SMALL SUBUNIT"/>
    <property type="match status" value="1"/>
</dbReference>
<dbReference type="Pfam" id="PF02609">
    <property type="entry name" value="Exonuc_VII_S"/>
    <property type="match status" value="1"/>
</dbReference>
<dbReference type="PIRSF" id="PIRSF006488">
    <property type="entry name" value="Exonuc_VII_S"/>
    <property type="match status" value="1"/>
</dbReference>
<dbReference type="SUPFAM" id="SSF116842">
    <property type="entry name" value="XseB-like"/>
    <property type="match status" value="1"/>
</dbReference>
<name>EX7S_RHOP2</name>
<comment type="function">
    <text evidence="1">Bidirectionally degrades single-stranded DNA into large acid-insoluble oligonucleotides, which are then degraded further into small acid-soluble oligonucleotides.</text>
</comment>
<comment type="catalytic activity">
    <reaction evidence="1">
        <text>Exonucleolytic cleavage in either 5'- to 3'- or 3'- to 5'-direction to yield nucleoside 5'-phosphates.</text>
        <dbReference type="EC" id="3.1.11.6"/>
    </reaction>
</comment>
<comment type="subunit">
    <text evidence="1">Heterooligomer composed of large and small subunits.</text>
</comment>
<comment type="subcellular location">
    <subcellularLocation>
        <location evidence="1">Cytoplasm</location>
    </subcellularLocation>
</comment>
<comment type="similarity">
    <text evidence="1">Belongs to the XseB family.</text>
</comment>
<sequence length="83" mass="9283">MADAAPADVKKLSFERAMEELETIVKRLEDGKVPLEESVAIYERGEALKRRCEELLRQAEARVDKITTDAQGQPVGTEPLDVQ</sequence>
<keyword id="KW-0963">Cytoplasm</keyword>
<keyword id="KW-0269">Exonuclease</keyword>
<keyword id="KW-0378">Hydrolase</keyword>
<keyword id="KW-0540">Nuclease</keyword>
<keyword id="KW-1185">Reference proteome</keyword>
<proteinExistence type="inferred from homology"/>
<protein>
    <recommendedName>
        <fullName evidence="1">Exodeoxyribonuclease 7 small subunit</fullName>
        <ecNumber evidence="1">3.1.11.6</ecNumber>
    </recommendedName>
    <alternativeName>
        <fullName evidence="1">Exodeoxyribonuclease VII small subunit</fullName>
        <shortName evidence="1">Exonuclease VII small subunit</shortName>
    </alternativeName>
</protein>
<evidence type="ECO:0000255" key="1">
    <source>
        <dbReference type="HAMAP-Rule" id="MF_00337"/>
    </source>
</evidence>
<accession>Q2IRL8</accession>